<dbReference type="EMBL" id="AE016879">
    <property type="protein sequence ID" value="AAP24182.1"/>
    <property type="molecule type" value="Genomic_DNA"/>
</dbReference>
<dbReference type="EMBL" id="AE017225">
    <property type="protein sequence ID" value="AAT52465.1"/>
    <property type="molecule type" value="Genomic_DNA"/>
</dbReference>
<dbReference type="EMBL" id="AE017334">
    <property type="protein sequence ID" value="AAT29208.1"/>
    <property type="molecule type" value="Genomic_DNA"/>
</dbReference>
<dbReference type="RefSeq" id="NP_842696.1">
    <property type="nucleotide sequence ID" value="NC_003997.3"/>
</dbReference>
<dbReference type="RefSeq" id="WP_001085234.1">
    <property type="nucleotide sequence ID" value="NZ_WXXJ01000051.1"/>
</dbReference>
<dbReference type="RefSeq" id="YP_026414.1">
    <property type="nucleotide sequence ID" value="NC_005945.1"/>
</dbReference>
<dbReference type="SMR" id="Q81VR2"/>
<dbReference type="STRING" id="261594.GBAA_0128"/>
<dbReference type="DNASU" id="1084559"/>
<dbReference type="GeneID" id="93010925"/>
<dbReference type="KEGG" id="ban:BA_0128"/>
<dbReference type="KEGG" id="bar:GBAA_0128"/>
<dbReference type="KEGG" id="bat:BAS0128"/>
<dbReference type="PATRIC" id="fig|198094.11.peg.125"/>
<dbReference type="eggNOG" id="COG1841">
    <property type="taxonomic scope" value="Bacteria"/>
</dbReference>
<dbReference type="HOGENOM" id="CLU_131047_2_1_9"/>
<dbReference type="OMA" id="KMHKTRE"/>
<dbReference type="OrthoDB" id="9812790at2"/>
<dbReference type="Proteomes" id="UP000000427">
    <property type="component" value="Chromosome"/>
</dbReference>
<dbReference type="Proteomes" id="UP000000594">
    <property type="component" value="Chromosome"/>
</dbReference>
<dbReference type="GO" id="GO:0022625">
    <property type="term" value="C:cytosolic large ribosomal subunit"/>
    <property type="evidence" value="ECO:0007669"/>
    <property type="project" value="TreeGrafter"/>
</dbReference>
<dbReference type="GO" id="GO:0003735">
    <property type="term" value="F:structural constituent of ribosome"/>
    <property type="evidence" value="ECO:0007669"/>
    <property type="project" value="InterPro"/>
</dbReference>
<dbReference type="GO" id="GO:0006412">
    <property type="term" value="P:translation"/>
    <property type="evidence" value="ECO:0007669"/>
    <property type="project" value="UniProtKB-UniRule"/>
</dbReference>
<dbReference type="CDD" id="cd01658">
    <property type="entry name" value="Ribosomal_L30"/>
    <property type="match status" value="1"/>
</dbReference>
<dbReference type="FunFam" id="3.30.1390.20:FF:000001">
    <property type="entry name" value="50S ribosomal protein L30"/>
    <property type="match status" value="1"/>
</dbReference>
<dbReference type="Gene3D" id="3.30.1390.20">
    <property type="entry name" value="Ribosomal protein L30, ferredoxin-like fold domain"/>
    <property type="match status" value="1"/>
</dbReference>
<dbReference type="HAMAP" id="MF_01371_B">
    <property type="entry name" value="Ribosomal_uL30_B"/>
    <property type="match status" value="1"/>
</dbReference>
<dbReference type="InterPro" id="IPR036919">
    <property type="entry name" value="Ribo_uL30_ferredoxin-like_sf"/>
</dbReference>
<dbReference type="InterPro" id="IPR005996">
    <property type="entry name" value="Ribosomal_uL30_bac-type"/>
</dbReference>
<dbReference type="InterPro" id="IPR018038">
    <property type="entry name" value="Ribosomal_uL30_CS"/>
</dbReference>
<dbReference type="InterPro" id="IPR016082">
    <property type="entry name" value="Ribosomal_uL30_ferredoxin-like"/>
</dbReference>
<dbReference type="NCBIfam" id="TIGR01308">
    <property type="entry name" value="rpmD_bact"/>
    <property type="match status" value="1"/>
</dbReference>
<dbReference type="PANTHER" id="PTHR15892:SF2">
    <property type="entry name" value="LARGE RIBOSOMAL SUBUNIT PROTEIN UL30M"/>
    <property type="match status" value="1"/>
</dbReference>
<dbReference type="PANTHER" id="PTHR15892">
    <property type="entry name" value="MITOCHONDRIAL RIBOSOMAL PROTEIN L30"/>
    <property type="match status" value="1"/>
</dbReference>
<dbReference type="Pfam" id="PF00327">
    <property type="entry name" value="Ribosomal_L30"/>
    <property type="match status" value="1"/>
</dbReference>
<dbReference type="PIRSF" id="PIRSF002211">
    <property type="entry name" value="Ribosomal_L30_bac-type"/>
    <property type="match status" value="1"/>
</dbReference>
<dbReference type="SUPFAM" id="SSF55129">
    <property type="entry name" value="Ribosomal protein L30p/L7e"/>
    <property type="match status" value="1"/>
</dbReference>
<dbReference type="PROSITE" id="PS00634">
    <property type="entry name" value="RIBOSOMAL_L30"/>
    <property type="match status" value="1"/>
</dbReference>
<sequence>MAKKLEITLTRSVIGRPQDQRATVEALGLKKLNSTVVKEETPAILGMINKVSHLVTVKEA</sequence>
<accession>Q81VR2</accession>
<accession>Q6I4R6</accession>
<accession>Q6KYG2</accession>
<comment type="subunit">
    <text evidence="1">Part of the 50S ribosomal subunit.</text>
</comment>
<comment type="similarity">
    <text evidence="1">Belongs to the universal ribosomal protein uL30 family.</text>
</comment>
<organism>
    <name type="scientific">Bacillus anthracis</name>
    <dbReference type="NCBI Taxonomy" id="1392"/>
    <lineage>
        <taxon>Bacteria</taxon>
        <taxon>Bacillati</taxon>
        <taxon>Bacillota</taxon>
        <taxon>Bacilli</taxon>
        <taxon>Bacillales</taxon>
        <taxon>Bacillaceae</taxon>
        <taxon>Bacillus</taxon>
        <taxon>Bacillus cereus group</taxon>
    </lineage>
</organism>
<gene>
    <name evidence="1" type="primary">rpmD</name>
    <name type="ordered locus">BA_0128</name>
    <name type="ordered locus">GBAA_0128</name>
    <name type="ordered locus">BAS0128</name>
</gene>
<keyword id="KW-1185">Reference proteome</keyword>
<keyword id="KW-0687">Ribonucleoprotein</keyword>
<keyword id="KW-0689">Ribosomal protein</keyword>
<reference key="1">
    <citation type="journal article" date="2003" name="Nature">
        <title>The genome sequence of Bacillus anthracis Ames and comparison to closely related bacteria.</title>
        <authorList>
            <person name="Read T.D."/>
            <person name="Peterson S.N."/>
            <person name="Tourasse N.J."/>
            <person name="Baillie L.W."/>
            <person name="Paulsen I.T."/>
            <person name="Nelson K.E."/>
            <person name="Tettelin H."/>
            <person name="Fouts D.E."/>
            <person name="Eisen J.A."/>
            <person name="Gill S.R."/>
            <person name="Holtzapple E.K."/>
            <person name="Okstad O.A."/>
            <person name="Helgason E."/>
            <person name="Rilstone J."/>
            <person name="Wu M."/>
            <person name="Kolonay J.F."/>
            <person name="Beanan M.J."/>
            <person name="Dodson R.J."/>
            <person name="Brinkac L.M."/>
            <person name="Gwinn M.L."/>
            <person name="DeBoy R.T."/>
            <person name="Madpu R."/>
            <person name="Daugherty S.C."/>
            <person name="Durkin A.S."/>
            <person name="Haft D.H."/>
            <person name="Nelson W.C."/>
            <person name="Peterson J.D."/>
            <person name="Pop M."/>
            <person name="Khouri H.M."/>
            <person name="Radune D."/>
            <person name="Benton J.L."/>
            <person name="Mahamoud Y."/>
            <person name="Jiang L."/>
            <person name="Hance I.R."/>
            <person name="Weidman J.F."/>
            <person name="Berry K.J."/>
            <person name="Plaut R.D."/>
            <person name="Wolf A.M."/>
            <person name="Watkins K.L."/>
            <person name="Nierman W.C."/>
            <person name="Hazen A."/>
            <person name="Cline R.T."/>
            <person name="Redmond C."/>
            <person name="Thwaite J.E."/>
            <person name="White O."/>
            <person name="Salzberg S.L."/>
            <person name="Thomason B."/>
            <person name="Friedlander A.M."/>
            <person name="Koehler T.M."/>
            <person name="Hanna P.C."/>
            <person name="Kolstoe A.-B."/>
            <person name="Fraser C.M."/>
        </authorList>
    </citation>
    <scope>NUCLEOTIDE SEQUENCE [LARGE SCALE GENOMIC DNA]</scope>
    <source>
        <strain>Ames / isolate Porton</strain>
    </source>
</reference>
<reference key="2">
    <citation type="submission" date="2004-01" db="EMBL/GenBank/DDBJ databases">
        <title>Complete genome sequence of Bacillus anthracis Sterne.</title>
        <authorList>
            <person name="Brettin T.S."/>
            <person name="Bruce D."/>
            <person name="Challacombe J.F."/>
            <person name="Gilna P."/>
            <person name="Han C."/>
            <person name="Hill K."/>
            <person name="Hitchcock P."/>
            <person name="Jackson P."/>
            <person name="Keim P."/>
            <person name="Longmire J."/>
            <person name="Lucas S."/>
            <person name="Okinaka R."/>
            <person name="Richardson P."/>
            <person name="Rubin E."/>
            <person name="Tice H."/>
        </authorList>
    </citation>
    <scope>NUCLEOTIDE SEQUENCE [LARGE SCALE GENOMIC DNA]</scope>
    <source>
        <strain>Sterne</strain>
    </source>
</reference>
<reference key="3">
    <citation type="journal article" date="2009" name="J. Bacteriol.">
        <title>The complete genome sequence of Bacillus anthracis Ames 'Ancestor'.</title>
        <authorList>
            <person name="Ravel J."/>
            <person name="Jiang L."/>
            <person name="Stanley S.T."/>
            <person name="Wilson M.R."/>
            <person name="Decker R.S."/>
            <person name="Read T.D."/>
            <person name="Worsham P."/>
            <person name="Keim P.S."/>
            <person name="Salzberg S.L."/>
            <person name="Fraser-Liggett C.M."/>
            <person name="Rasko D.A."/>
        </authorList>
    </citation>
    <scope>NUCLEOTIDE SEQUENCE [LARGE SCALE GENOMIC DNA]</scope>
    <source>
        <strain>Ames ancestor</strain>
    </source>
</reference>
<name>RL30_BACAN</name>
<feature type="chain" id="PRO_0000273740" description="Large ribosomal subunit protein uL30">
    <location>
        <begin position="1"/>
        <end position="60"/>
    </location>
</feature>
<evidence type="ECO:0000255" key="1">
    <source>
        <dbReference type="HAMAP-Rule" id="MF_01371"/>
    </source>
</evidence>
<evidence type="ECO:0000305" key="2"/>
<proteinExistence type="inferred from homology"/>
<protein>
    <recommendedName>
        <fullName evidence="1">Large ribosomal subunit protein uL30</fullName>
    </recommendedName>
    <alternativeName>
        <fullName evidence="2">50S ribosomal protein L30</fullName>
    </alternativeName>
</protein>